<proteinExistence type="inferred from homology"/>
<accession>Q31WU4</accession>
<protein>
    <recommendedName>
        <fullName evidence="1">Serine/threonine transporter SstT</fullName>
    </recommendedName>
    <alternativeName>
        <fullName evidence="1">Na(+)/serine-threonine symporter</fullName>
    </alternativeName>
</protein>
<dbReference type="EMBL" id="CP000036">
    <property type="protein sequence ID" value="ABB67464.1"/>
    <property type="molecule type" value="Genomic_DNA"/>
</dbReference>
<dbReference type="RefSeq" id="WP_000211646.1">
    <property type="nucleotide sequence ID" value="NC_007613.1"/>
</dbReference>
<dbReference type="SMR" id="Q31WU4"/>
<dbReference type="KEGG" id="sbo:SBO_2950"/>
<dbReference type="HOGENOM" id="CLU_044581_0_0_6"/>
<dbReference type="Proteomes" id="UP000007067">
    <property type="component" value="Chromosome"/>
</dbReference>
<dbReference type="GO" id="GO:0005886">
    <property type="term" value="C:plasma membrane"/>
    <property type="evidence" value="ECO:0007669"/>
    <property type="project" value="UniProtKB-SubCell"/>
</dbReference>
<dbReference type="GO" id="GO:0005295">
    <property type="term" value="F:neutral L-amino acid:sodium symporter activity"/>
    <property type="evidence" value="ECO:0007669"/>
    <property type="project" value="TreeGrafter"/>
</dbReference>
<dbReference type="GO" id="GO:0032329">
    <property type="term" value="P:serine transport"/>
    <property type="evidence" value="ECO:0007669"/>
    <property type="project" value="InterPro"/>
</dbReference>
<dbReference type="GO" id="GO:0015826">
    <property type="term" value="P:threonine transport"/>
    <property type="evidence" value="ECO:0007669"/>
    <property type="project" value="InterPro"/>
</dbReference>
<dbReference type="FunFam" id="1.10.3860.10:FF:000003">
    <property type="entry name" value="Serine/threonine transporter sstT"/>
    <property type="match status" value="1"/>
</dbReference>
<dbReference type="Gene3D" id="1.10.3860.10">
    <property type="entry name" value="Sodium:dicarboxylate symporter"/>
    <property type="match status" value="1"/>
</dbReference>
<dbReference type="HAMAP" id="MF_01582">
    <property type="entry name" value="Ser_Thr_transp_SstT"/>
    <property type="match status" value="1"/>
</dbReference>
<dbReference type="InterPro" id="IPR001991">
    <property type="entry name" value="Na-dicarboxylate_symporter"/>
</dbReference>
<dbReference type="InterPro" id="IPR036458">
    <property type="entry name" value="Na:dicarbo_symporter_sf"/>
</dbReference>
<dbReference type="InterPro" id="IPR023025">
    <property type="entry name" value="Ser_Thr_transp_SstT"/>
</dbReference>
<dbReference type="NCBIfam" id="NF010151">
    <property type="entry name" value="PRK13628.1"/>
    <property type="match status" value="1"/>
</dbReference>
<dbReference type="PANTHER" id="PTHR42865">
    <property type="entry name" value="PROTON/GLUTAMATE-ASPARTATE SYMPORTER"/>
    <property type="match status" value="1"/>
</dbReference>
<dbReference type="PANTHER" id="PTHR42865:SF8">
    <property type="entry name" value="SERINE_THREONINE TRANSPORTER SSTT"/>
    <property type="match status" value="1"/>
</dbReference>
<dbReference type="Pfam" id="PF00375">
    <property type="entry name" value="SDF"/>
    <property type="match status" value="1"/>
</dbReference>
<dbReference type="PRINTS" id="PR00173">
    <property type="entry name" value="EDTRNSPORT"/>
</dbReference>
<dbReference type="SUPFAM" id="SSF118215">
    <property type="entry name" value="Proton glutamate symport protein"/>
    <property type="match status" value="1"/>
</dbReference>
<dbReference type="PROSITE" id="PS00713">
    <property type="entry name" value="NA_DICARBOXYL_SYMP_1"/>
    <property type="match status" value="1"/>
</dbReference>
<keyword id="KW-0029">Amino-acid transport</keyword>
<keyword id="KW-0997">Cell inner membrane</keyword>
<keyword id="KW-1003">Cell membrane</keyword>
<keyword id="KW-0472">Membrane</keyword>
<keyword id="KW-0769">Symport</keyword>
<keyword id="KW-0812">Transmembrane</keyword>
<keyword id="KW-1133">Transmembrane helix</keyword>
<keyword id="KW-0813">Transport</keyword>
<sequence length="414" mass="43460">MTTQRSPGLFRRLAHGSLVKQILVGLVLGILLAWISKPAAEAVGLLGTLFVGALKAVAPILVLMLVMASIANHQHGQKTNIRPILFLYLLGTFSAALAAVVFSFAFPSTLHLSSSAGDISPPSGIVEVMRGLVMSMVSNPIDALLKGNYIGILVWAIGLGFALRHGNETTKNLVNDLSNAVTFMVKLVIRFAPIGIFGLVSSTLATTGFSTLWGYAQLLVVLVGCMLLVALVVNPLLVWWKIRRNPFPLVLLCLRESGVYAFFTRSSAANIPVNMALCEKLNLDRDTYSVSIPLGATINMAGAAITITVLTLAAVNTLGIPVDLPTALLLSVVASLCACGASGVAGGSLLLIPLACNMFGISNDIAMQVVAVGFIIGVLQDSCETALNSSTDVLFTAAACQAEDDRLANSALRN</sequence>
<gene>
    <name evidence="1" type="primary">sstT</name>
    <name type="ordered locus">SBO_2950</name>
</gene>
<feature type="initiator methionine" description="Removed" evidence="1">
    <location>
        <position position="1"/>
    </location>
</feature>
<feature type="chain" id="PRO_0000309129" description="Serine/threonine transporter SstT">
    <location>
        <begin position="2"/>
        <end position="414"/>
    </location>
</feature>
<feature type="topological domain" description="Cytoplasmic" evidence="1">
    <location>
        <begin position="2"/>
        <end position="15"/>
    </location>
</feature>
<feature type="transmembrane region" description="Helical" evidence="1">
    <location>
        <begin position="16"/>
        <end position="36"/>
    </location>
</feature>
<feature type="topological domain" description="Periplasmic" evidence="1">
    <location>
        <begin position="37"/>
        <end position="45"/>
    </location>
</feature>
<feature type="transmembrane region" description="Helical" evidence="1">
    <location>
        <begin position="46"/>
        <end position="66"/>
    </location>
</feature>
<feature type="topological domain" description="Cytoplasmic" evidence="1">
    <location>
        <begin position="67"/>
        <end position="83"/>
    </location>
</feature>
<feature type="transmembrane region" description="Helical" evidence="1">
    <location>
        <begin position="84"/>
        <end position="104"/>
    </location>
</feature>
<feature type="topological domain" description="Periplasmic" evidence="1">
    <location>
        <begin position="105"/>
        <end position="142"/>
    </location>
</feature>
<feature type="transmembrane region" description="Helical" evidence="1">
    <location>
        <begin position="143"/>
        <end position="163"/>
    </location>
</feature>
<feature type="topological domain" description="Cytoplasmic" evidence="1">
    <location>
        <begin position="164"/>
        <end position="179"/>
    </location>
</feature>
<feature type="transmembrane region" description="Helical" evidence="1">
    <location>
        <begin position="180"/>
        <end position="200"/>
    </location>
</feature>
<feature type="topological domain" description="Periplasmic" evidence="1">
    <location>
        <begin position="201"/>
        <end position="217"/>
    </location>
</feature>
<feature type="transmembrane region" description="Helical" evidence="1">
    <location>
        <begin position="218"/>
        <end position="238"/>
    </location>
</feature>
<feature type="topological domain" description="Cytoplasmic" evidence="1">
    <location>
        <begin position="239"/>
        <end position="299"/>
    </location>
</feature>
<feature type="transmembrane region" description="Helical" evidence="1">
    <location>
        <begin position="300"/>
        <end position="320"/>
    </location>
</feature>
<feature type="topological domain" description="Periplasmic" evidence="1">
    <location>
        <begin position="321"/>
        <end position="331"/>
    </location>
</feature>
<feature type="transmembrane region" description="Helical" evidence="1">
    <location>
        <begin position="332"/>
        <end position="352"/>
    </location>
</feature>
<feature type="topological domain" description="Cytoplasmic" evidence="1">
    <location>
        <begin position="353"/>
        <end position="414"/>
    </location>
</feature>
<evidence type="ECO:0000255" key="1">
    <source>
        <dbReference type="HAMAP-Rule" id="MF_01582"/>
    </source>
</evidence>
<comment type="function">
    <text evidence="1">Involved in the import of serine and threonine into the cell, with the concomitant import of sodium (symport system).</text>
</comment>
<comment type="catalytic activity">
    <reaction evidence="1">
        <text>L-serine(in) + Na(+)(in) = L-serine(out) + Na(+)(out)</text>
        <dbReference type="Rhea" id="RHEA:29575"/>
        <dbReference type="ChEBI" id="CHEBI:29101"/>
        <dbReference type="ChEBI" id="CHEBI:33384"/>
    </reaction>
    <physiologicalReaction direction="right-to-left" evidence="1">
        <dbReference type="Rhea" id="RHEA:29577"/>
    </physiologicalReaction>
</comment>
<comment type="catalytic activity">
    <reaction evidence="1">
        <text>L-threonine(in) + Na(+)(in) = L-threonine(out) + Na(+)(out)</text>
        <dbReference type="Rhea" id="RHEA:69999"/>
        <dbReference type="ChEBI" id="CHEBI:29101"/>
        <dbReference type="ChEBI" id="CHEBI:57926"/>
    </reaction>
    <physiologicalReaction direction="right-to-left" evidence="1">
        <dbReference type="Rhea" id="RHEA:70001"/>
    </physiologicalReaction>
</comment>
<comment type="subcellular location">
    <subcellularLocation>
        <location evidence="1">Cell inner membrane</location>
        <topology evidence="1">Multi-pass membrane protein</topology>
    </subcellularLocation>
</comment>
<comment type="similarity">
    <text evidence="1">Belongs to the dicarboxylate/amino acid:cation symporter (DAACS) (TC 2.A.23) family.</text>
</comment>
<name>SSTT_SHIBS</name>
<reference key="1">
    <citation type="journal article" date="2005" name="Nucleic Acids Res.">
        <title>Genome dynamics and diversity of Shigella species, the etiologic agents of bacillary dysentery.</title>
        <authorList>
            <person name="Yang F."/>
            <person name="Yang J."/>
            <person name="Zhang X."/>
            <person name="Chen L."/>
            <person name="Jiang Y."/>
            <person name="Yan Y."/>
            <person name="Tang X."/>
            <person name="Wang J."/>
            <person name="Xiong Z."/>
            <person name="Dong J."/>
            <person name="Xue Y."/>
            <person name="Zhu Y."/>
            <person name="Xu X."/>
            <person name="Sun L."/>
            <person name="Chen S."/>
            <person name="Nie H."/>
            <person name="Peng J."/>
            <person name="Xu J."/>
            <person name="Wang Y."/>
            <person name="Yuan Z."/>
            <person name="Wen Y."/>
            <person name="Yao Z."/>
            <person name="Shen Y."/>
            <person name="Qiang B."/>
            <person name="Hou Y."/>
            <person name="Yu J."/>
            <person name="Jin Q."/>
        </authorList>
    </citation>
    <scope>NUCLEOTIDE SEQUENCE [LARGE SCALE GENOMIC DNA]</scope>
    <source>
        <strain>Sb227</strain>
    </source>
</reference>
<organism>
    <name type="scientific">Shigella boydii serotype 4 (strain Sb227)</name>
    <dbReference type="NCBI Taxonomy" id="300268"/>
    <lineage>
        <taxon>Bacteria</taxon>
        <taxon>Pseudomonadati</taxon>
        <taxon>Pseudomonadota</taxon>
        <taxon>Gammaproteobacteria</taxon>
        <taxon>Enterobacterales</taxon>
        <taxon>Enterobacteriaceae</taxon>
        <taxon>Shigella</taxon>
    </lineage>
</organism>